<keyword id="KW-0378">Hydrolase</keyword>
<name>APAH_PARC0</name>
<reference key="1">
    <citation type="submission" date="2006-12" db="EMBL/GenBank/DDBJ databases">
        <title>Complete sequence of Acidovorax avenae subsp. citrulli AAC00-1.</title>
        <authorList>
            <person name="Copeland A."/>
            <person name="Lucas S."/>
            <person name="Lapidus A."/>
            <person name="Barry K."/>
            <person name="Detter J.C."/>
            <person name="Glavina del Rio T."/>
            <person name="Dalin E."/>
            <person name="Tice H."/>
            <person name="Pitluck S."/>
            <person name="Kiss H."/>
            <person name="Brettin T."/>
            <person name="Bruce D."/>
            <person name="Han C."/>
            <person name="Tapia R."/>
            <person name="Gilna P."/>
            <person name="Schmutz J."/>
            <person name="Larimer F."/>
            <person name="Land M."/>
            <person name="Hauser L."/>
            <person name="Kyrpides N."/>
            <person name="Kim E."/>
            <person name="Stahl D."/>
            <person name="Richardson P."/>
        </authorList>
    </citation>
    <scope>NUCLEOTIDE SEQUENCE [LARGE SCALE GENOMIC DNA]</scope>
    <source>
        <strain>AAC00-1</strain>
    </source>
</reference>
<comment type="function">
    <text evidence="1">Hydrolyzes diadenosine 5',5'''-P1,P4-tetraphosphate to yield ADP.</text>
</comment>
<comment type="catalytic activity">
    <reaction evidence="1">
        <text>P(1),P(4)-bis(5'-adenosyl) tetraphosphate + H2O = 2 ADP + 2 H(+)</text>
        <dbReference type="Rhea" id="RHEA:24252"/>
        <dbReference type="ChEBI" id="CHEBI:15377"/>
        <dbReference type="ChEBI" id="CHEBI:15378"/>
        <dbReference type="ChEBI" id="CHEBI:58141"/>
        <dbReference type="ChEBI" id="CHEBI:456216"/>
        <dbReference type="EC" id="3.6.1.41"/>
    </reaction>
</comment>
<comment type="similarity">
    <text evidence="1">Belongs to the Ap4A hydrolase family.</text>
</comment>
<feature type="chain" id="PRO_1000012038" description="Bis(5'-nucleosyl)-tetraphosphatase, symmetrical">
    <location>
        <begin position="1"/>
        <end position="280"/>
    </location>
</feature>
<protein>
    <recommendedName>
        <fullName evidence="1">Bis(5'-nucleosyl)-tetraphosphatase, symmetrical</fullName>
        <ecNumber evidence="1">3.6.1.41</ecNumber>
    </recommendedName>
    <alternativeName>
        <fullName evidence="1">Ap4A hydrolase</fullName>
    </alternativeName>
    <alternativeName>
        <fullName evidence="1">Diadenosine 5',5'''-P1,P4-tetraphosphate pyrophosphohydrolase</fullName>
    </alternativeName>
    <alternativeName>
        <fullName evidence="1">Diadenosine tetraphosphatase</fullName>
    </alternativeName>
</protein>
<gene>
    <name evidence="1" type="primary">apaH</name>
    <name type="ordered locus">Aave_1149</name>
</gene>
<evidence type="ECO:0000255" key="1">
    <source>
        <dbReference type="HAMAP-Rule" id="MF_00199"/>
    </source>
</evidence>
<sequence length="280" mass="30655">MALYCIGDIQGCDAALQRLLDTVDFSPSRDTVYLLGDLVNRGPQSAEVLRRCARGGDSLRALLGNHDLHLLAAAHGARKPSRRDTLAGVLQAPDRDALLDWLKRQPLAREHRLAGERLLMVHAGVLPSWTADATLEHAAEVQARLQGDALPEFLQAMYGNAPDRWSDELSGMDRWRAIVNALTRLRFCTPDGRMDFDSSEAADAAPDGLVPWFDAPGRRTRGTLVAFGHWSTLGWMNRPDLLALDTGCVWGGCLSAVRFGATLAEREHISVRCEQAQAPG</sequence>
<proteinExistence type="inferred from homology"/>
<organism>
    <name type="scientific">Paracidovorax citrulli (strain AAC00-1)</name>
    <name type="common">Acidovorax citrulli</name>
    <dbReference type="NCBI Taxonomy" id="397945"/>
    <lineage>
        <taxon>Bacteria</taxon>
        <taxon>Pseudomonadati</taxon>
        <taxon>Pseudomonadota</taxon>
        <taxon>Betaproteobacteria</taxon>
        <taxon>Burkholderiales</taxon>
        <taxon>Comamonadaceae</taxon>
        <taxon>Paracidovorax</taxon>
    </lineage>
</organism>
<accession>A1TLA3</accession>
<dbReference type="EC" id="3.6.1.41" evidence="1"/>
<dbReference type="EMBL" id="CP000512">
    <property type="protein sequence ID" value="ABM31741.1"/>
    <property type="molecule type" value="Genomic_DNA"/>
</dbReference>
<dbReference type="RefSeq" id="WP_011794294.1">
    <property type="nucleotide sequence ID" value="NC_008752.1"/>
</dbReference>
<dbReference type="SMR" id="A1TLA3"/>
<dbReference type="STRING" id="397945.Aave_1149"/>
<dbReference type="KEGG" id="aav:Aave_1149"/>
<dbReference type="eggNOG" id="COG0639">
    <property type="taxonomic scope" value="Bacteria"/>
</dbReference>
<dbReference type="HOGENOM" id="CLU_056184_1_0_4"/>
<dbReference type="OrthoDB" id="9807890at2"/>
<dbReference type="Proteomes" id="UP000002596">
    <property type="component" value="Chromosome"/>
</dbReference>
<dbReference type="GO" id="GO:0008803">
    <property type="term" value="F:bis(5'-nucleosyl)-tetraphosphatase (symmetrical) activity"/>
    <property type="evidence" value="ECO:0007669"/>
    <property type="project" value="UniProtKB-UniRule"/>
</dbReference>
<dbReference type="CDD" id="cd07422">
    <property type="entry name" value="MPP_ApaH"/>
    <property type="match status" value="1"/>
</dbReference>
<dbReference type="Gene3D" id="3.60.21.10">
    <property type="match status" value="1"/>
</dbReference>
<dbReference type="HAMAP" id="MF_00199">
    <property type="entry name" value="ApaH"/>
    <property type="match status" value="1"/>
</dbReference>
<dbReference type="InterPro" id="IPR004617">
    <property type="entry name" value="ApaH"/>
</dbReference>
<dbReference type="InterPro" id="IPR004843">
    <property type="entry name" value="Calcineurin-like_PHP_ApaH"/>
</dbReference>
<dbReference type="InterPro" id="IPR029052">
    <property type="entry name" value="Metallo-depent_PP-like"/>
</dbReference>
<dbReference type="NCBIfam" id="TIGR00668">
    <property type="entry name" value="apaH"/>
    <property type="match status" value="1"/>
</dbReference>
<dbReference type="NCBIfam" id="NF001204">
    <property type="entry name" value="PRK00166.1"/>
    <property type="match status" value="1"/>
</dbReference>
<dbReference type="PANTHER" id="PTHR40942">
    <property type="match status" value="1"/>
</dbReference>
<dbReference type="PANTHER" id="PTHR40942:SF4">
    <property type="entry name" value="CYTOCHROME C5"/>
    <property type="match status" value="1"/>
</dbReference>
<dbReference type="Pfam" id="PF00149">
    <property type="entry name" value="Metallophos"/>
    <property type="match status" value="1"/>
</dbReference>
<dbReference type="PIRSF" id="PIRSF000903">
    <property type="entry name" value="B5n-ttraPtase_sm"/>
    <property type="match status" value="1"/>
</dbReference>
<dbReference type="SUPFAM" id="SSF56300">
    <property type="entry name" value="Metallo-dependent phosphatases"/>
    <property type="match status" value="1"/>
</dbReference>